<reference key="1">
    <citation type="thesis" date="1995" institute="Concordia University / Montreal" country="Canada">
        <title>The cDNA cloning of rabbit muscle-specific enolase gene, site directed mutagenesis (E417L) of the gene, expression of the wild-type and mutant genes in Escherichia coli.</title>
        <authorList>
            <person name="Zheng S.-X."/>
        </authorList>
    </citation>
    <scope>NUCLEOTIDE SEQUENCE [MRNA]</scope>
    <source>
        <tissue>Muscle</tissue>
    </source>
</reference>
<reference key="2">
    <citation type="submission" date="2001-05" db="EMBL/GenBank/DDBJ databases">
        <authorList>
            <person name="Kornblatt M.J."/>
            <person name="Zheng S.-X."/>
            <person name="Lamande N."/>
            <person name="Lazar M."/>
        </authorList>
    </citation>
    <scope>SEQUENCE REVISION TO 297-309 AND 315</scope>
</reference>
<reference key="3">
    <citation type="journal article" date="1990" name="J. Protein Chem.">
        <title>The primary structure of rabbit muscle enolase.</title>
        <authorList>
            <person name="Chin C.C.Q."/>
        </authorList>
    </citation>
    <scope>PROTEIN SEQUENCE OF 2-434</scope>
    <source>
        <tissue>Muscle</tissue>
    </source>
</reference>
<reference key="4">
    <citation type="journal article" date="1999" name="Biochem. J.">
        <title>Presence of enolase in the M-band of skeletal muscle and possible indirect interaction with the cytosolic muscle isoform of creatine kinase.</title>
        <authorList>
            <person name="Foucault G."/>
            <person name="Vacher M."/>
            <person name="Merkulova T."/>
            <person name="Keller A."/>
            <person name="Arrio-Dupont M."/>
        </authorList>
    </citation>
    <scope>SUBCELLULAR LOCATION</scope>
</reference>
<comment type="function">
    <text evidence="3">Glycolytic enzyme that catalyzes the conversion of 2-phosphoglycerate to phosphoenolpyruvate. Appears to have a function in striated muscle development and regeneration.</text>
</comment>
<comment type="catalytic activity">
    <reaction evidence="3">
        <text>(2R)-2-phosphoglycerate = phosphoenolpyruvate + H2O</text>
        <dbReference type="Rhea" id="RHEA:10164"/>
        <dbReference type="ChEBI" id="CHEBI:15377"/>
        <dbReference type="ChEBI" id="CHEBI:58289"/>
        <dbReference type="ChEBI" id="CHEBI:58702"/>
        <dbReference type="EC" id="4.2.1.11"/>
    </reaction>
    <physiologicalReaction direction="left-to-right" evidence="3">
        <dbReference type="Rhea" id="RHEA:10165"/>
    </physiologicalReaction>
</comment>
<comment type="cofactor">
    <cofactor>
        <name>Mg(2+)</name>
        <dbReference type="ChEBI" id="CHEBI:18420"/>
    </cofactor>
    <text>Mg(2+) is required for catalysis and for stabilizing the dimer.</text>
</comment>
<comment type="pathway">
    <text evidence="3">Carbohydrate degradation; glycolysis; pyruvate from D-glyceraldehyde 3-phosphate: step 4/5.</text>
</comment>
<comment type="subunit">
    <text evidence="1">Mammalian enolase is composed of 3 isozyme subunits, alpha, beta and gamma, which can form homodimers or heterodimers which are cell-type and development-specific. Interacts with PNKD (By similarity).</text>
</comment>
<comment type="subcellular location">
    <subcellularLocation>
        <location evidence="5">Cytoplasm</location>
    </subcellularLocation>
    <text evidence="1">Localized to the Z line (By similarity). Some colocalization with CKM at M-band.</text>
</comment>
<comment type="tissue specificity">
    <text>The alpha/alpha homodimer is expressed in embryo and in most adult tissues. The alpha/beta heterodimer and the beta/beta homodimer are found in striated muscle, and the alpha/gamma heterodimer and the gamma/gamma homodimer in neurons.</text>
</comment>
<comment type="developmental stage">
    <text>During ontogenesis, there is a transition from the alpha/alpha homodimer to the alpha/beta heterodimer in striated muscle cells.</text>
</comment>
<comment type="similarity">
    <text evidence="6">Belongs to the enolase family.</text>
</comment>
<accession>P25704</accession>
<accession>Q9N0N6</accession>
<gene>
    <name type="primary">ENO3</name>
</gene>
<dbReference type="EC" id="4.2.1.11" evidence="3"/>
<dbReference type="EMBL" id="AF260259">
    <property type="protein sequence ID" value="AAF71925.2"/>
    <property type="molecule type" value="mRNA"/>
</dbReference>
<dbReference type="PIR" id="A37210">
    <property type="entry name" value="A37210"/>
</dbReference>
<dbReference type="RefSeq" id="NP_001075554.1">
    <property type="nucleotide sequence ID" value="NM_001082085.1"/>
</dbReference>
<dbReference type="RefSeq" id="XP_069916009.1">
    <property type="nucleotide sequence ID" value="XM_070059908.1"/>
</dbReference>
<dbReference type="RefSeq" id="XP_069916010.1">
    <property type="nucleotide sequence ID" value="XM_070059909.1"/>
</dbReference>
<dbReference type="RefSeq" id="XP_069916011.1">
    <property type="nucleotide sequence ID" value="XM_070059910.1"/>
</dbReference>
<dbReference type="RefSeq" id="XP_069916012.1">
    <property type="nucleotide sequence ID" value="XM_070059911.1"/>
</dbReference>
<dbReference type="SMR" id="P25704"/>
<dbReference type="BioGRID" id="1171792">
    <property type="interactions" value="1"/>
</dbReference>
<dbReference type="FunCoup" id="P25704">
    <property type="interactions" value="669"/>
</dbReference>
<dbReference type="STRING" id="9986.ENSOCUP00000003109"/>
<dbReference type="GeneID" id="100008769"/>
<dbReference type="KEGG" id="ocu:100008769"/>
<dbReference type="CTD" id="2027"/>
<dbReference type="InParanoid" id="P25704"/>
<dbReference type="OrthoDB" id="1739814at2759"/>
<dbReference type="BRENDA" id="4.2.1.11">
    <property type="organism ID" value="1749"/>
</dbReference>
<dbReference type="SABIO-RK" id="P25704"/>
<dbReference type="UniPathway" id="UPA00109">
    <property type="reaction ID" value="UER00187"/>
</dbReference>
<dbReference type="Proteomes" id="UP000001811">
    <property type="component" value="Unplaced"/>
</dbReference>
<dbReference type="GO" id="GO:0000015">
    <property type="term" value="C:phosphopyruvate hydratase complex"/>
    <property type="evidence" value="ECO:0007669"/>
    <property type="project" value="InterPro"/>
</dbReference>
<dbReference type="GO" id="GO:0000287">
    <property type="term" value="F:magnesium ion binding"/>
    <property type="evidence" value="ECO:0007669"/>
    <property type="project" value="InterPro"/>
</dbReference>
<dbReference type="GO" id="GO:0004634">
    <property type="term" value="F:phosphopyruvate hydratase activity"/>
    <property type="evidence" value="ECO:0000314"/>
    <property type="project" value="CAFA"/>
</dbReference>
<dbReference type="GO" id="GO:0006096">
    <property type="term" value="P:glycolytic process"/>
    <property type="evidence" value="ECO:0007669"/>
    <property type="project" value="UniProtKB-UniPathway"/>
</dbReference>
<dbReference type="CDD" id="cd03313">
    <property type="entry name" value="enolase"/>
    <property type="match status" value="1"/>
</dbReference>
<dbReference type="FunFam" id="3.30.390.10:FF:000001">
    <property type="entry name" value="Enolase"/>
    <property type="match status" value="1"/>
</dbReference>
<dbReference type="FunFam" id="3.20.20.120:FF:000002">
    <property type="entry name" value="Enolase 1"/>
    <property type="match status" value="1"/>
</dbReference>
<dbReference type="Gene3D" id="3.20.20.120">
    <property type="entry name" value="Enolase-like C-terminal domain"/>
    <property type="match status" value="1"/>
</dbReference>
<dbReference type="Gene3D" id="3.30.390.10">
    <property type="entry name" value="Enolase-like, N-terminal domain"/>
    <property type="match status" value="1"/>
</dbReference>
<dbReference type="HAMAP" id="MF_00318">
    <property type="entry name" value="Enolase"/>
    <property type="match status" value="1"/>
</dbReference>
<dbReference type="InterPro" id="IPR000941">
    <property type="entry name" value="Enolase"/>
</dbReference>
<dbReference type="InterPro" id="IPR036849">
    <property type="entry name" value="Enolase-like_C_sf"/>
</dbReference>
<dbReference type="InterPro" id="IPR029017">
    <property type="entry name" value="Enolase-like_N"/>
</dbReference>
<dbReference type="InterPro" id="IPR020810">
    <property type="entry name" value="Enolase_C"/>
</dbReference>
<dbReference type="InterPro" id="IPR020809">
    <property type="entry name" value="Enolase_CS"/>
</dbReference>
<dbReference type="InterPro" id="IPR020811">
    <property type="entry name" value="Enolase_N"/>
</dbReference>
<dbReference type="NCBIfam" id="TIGR01060">
    <property type="entry name" value="eno"/>
    <property type="match status" value="1"/>
</dbReference>
<dbReference type="PANTHER" id="PTHR11902:SF5">
    <property type="entry name" value="BETA-ENOLASE"/>
    <property type="match status" value="1"/>
</dbReference>
<dbReference type="PANTHER" id="PTHR11902">
    <property type="entry name" value="ENOLASE"/>
    <property type="match status" value="1"/>
</dbReference>
<dbReference type="Pfam" id="PF00113">
    <property type="entry name" value="Enolase_C"/>
    <property type="match status" value="1"/>
</dbReference>
<dbReference type="Pfam" id="PF03952">
    <property type="entry name" value="Enolase_N"/>
    <property type="match status" value="1"/>
</dbReference>
<dbReference type="PIRSF" id="PIRSF001400">
    <property type="entry name" value="Enolase"/>
    <property type="match status" value="1"/>
</dbReference>
<dbReference type="PRINTS" id="PR00148">
    <property type="entry name" value="ENOLASE"/>
</dbReference>
<dbReference type="SFLD" id="SFLDF00002">
    <property type="entry name" value="enolase"/>
    <property type="match status" value="1"/>
</dbReference>
<dbReference type="SFLD" id="SFLDG00178">
    <property type="entry name" value="enolase"/>
    <property type="match status" value="1"/>
</dbReference>
<dbReference type="SMART" id="SM01192">
    <property type="entry name" value="Enolase_C"/>
    <property type="match status" value="1"/>
</dbReference>
<dbReference type="SMART" id="SM01193">
    <property type="entry name" value="Enolase_N"/>
    <property type="match status" value="1"/>
</dbReference>
<dbReference type="SUPFAM" id="SSF51604">
    <property type="entry name" value="Enolase C-terminal domain-like"/>
    <property type="match status" value="1"/>
</dbReference>
<dbReference type="SUPFAM" id="SSF54826">
    <property type="entry name" value="Enolase N-terminal domain-like"/>
    <property type="match status" value="1"/>
</dbReference>
<dbReference type="PROSITE" id="PS00164">
    <property type="entry name" value="ENOLASE"/>
    <property type="match status" value="1"/>
</dbReference>
<organism>
    <name type="scientific">Oryctolagus cuniculus</name>
    <name type="common">Rabbit</name>
    <dbReference type="NCBI Taxonomy" id="9986"/>
    <lineage>
        <taxon>Eukaryota</taxon>
        <taxon>Metazoa</taxon>
        <taxon>Chordata</taxon>
        <taxon>Craniata</taxon>
        <taxon>Vertebrata</taxon>
        <taxon>Euteleostomi</taxon>
        <taxon>Mammalia</taxon>
        <taxon>Eutheria</taxon>
        <taxon>Euarchontoglires</taxon>
        <taxon>Glires</taxon>
        <taxon>Lagomorpha</taxon>
        <taxon>Leporidae</taxon>
        <taxon>Oryctolagus</taxon>
    </lineage>
</organism>
<name>ENOB_RABIT</name>
<feature type="initiator methionine" description="Removed" evidence="2 4">
    <location>
        <position position="1"/>
    </location>
</feature>
<feature type="chain" id="PRO_0000134109" description="Beta-enolase">
    <location>
        <begin position="2"/>
        <end position="434"/>
    </location>
</feature>
<feature type="active site" description="Proton donor" evidence="1">
    <location>
        <position position="210"/>
    </location>
</feature>
<feature type="active site" description="Proton acceptor" evidence="1">
    <location>
        <position position="343"/>
    </location>
</feature>
<feature type="binding site" evidence="1">
    <location>
        <position position="158"/>
    </location>
    <ligand>
        <name>substrate</name>
    </ligand>
</feature>
<feature type="binding site" evidence="1">
    <location>
        <position position="167"/>
    </location>
    <ligand>
        <name>substrate</name>
    </ligand>
</feature>
<feature type="binding site" evidence="1">
    <location>
        <position position="245"/>
    </location>
    <ligand>
        <name>Mg(2+)</name>
        <dbReference type="ChEBI" id="CHEBI:18420"/>
    </ligand>
</feature>
<feature type="binding site" evidence="1">
    <location>
        <position position="293"/>
    </location>
    <ligand>
        <name>Mg(2+)</name>
        <dbReference type="ChEBI" id="CHEBI:18420"/>
    </ligand>
</feature>
<feature type="binding site" evidence="1">
    <location>
        <position position="293"/>
    </location>
    <ligand>
        <name>substrate</name>
    </ligand>
</feature>
<feature type="binding site" evidence="1">
    <location>
        <position position="318"/>
    </location>
    <ligand>
        <name>Mg(2+)</name>
        <dbReference type="ChEBI" id="CHEBI:18420"/>
    </ligand>
</feature>
<feature type="binding site" evidence="1">
    <location>
        <position position="318"/>
    </location>
    <ligand>
        <name>substrate</name>
    </ligand>
</feature>
<feature type="binding site" evidence="1">
    <location>
        <begin position="370"/>
        <end position="373"/>
    </location>
    <ligand>
        <name>substrate</name>
    </ligand>
</feature>
<feature type="binding site" evidence="1">
    <location>
        <position position="394"/>
    </location>
    <ligand>
        <name>substrate</name>
    </ligand>
</feature>
<feature type="modified residue" description="N-acetylalanine" evidence="2">
    <location>
        <position position="2"/>
    </location>
</feature>
<feature type="modified residue" description="Phosphothreonine" evidence="3">
    <location>
        <position position="72"/>
    </location>
</feature>
<feature type="modified residue" description="Phosphoserine" evidence="3">
    <location>
        <position position="83"/>
    </location>
</feature>
<feature type="modified residue" description="Phosphoserine" evidence="3">
    <location>
        <position position="157"/>
    </location>
</feature>
<feature type="modified residue" description="Phosphoserine" evidence="2">
    <location>
        <position position="176"/>
    </location>
</feature>
<feature type="modified residue" description="Phosphothreonine" evidence="3">
    <location>
        <position position="205"/>
    </location>
</feature>
<feature type="modified residue" description="Phosphothreonine" evidence="3">
    <location>
        <position position="229"/>
    </location>
</feature>
<feature type="modified residue" description="Phosphotyrosine" evidence="3">
    <location>
        <position position="236"/>
    </location>
</feature>
<feature type="modified residue" description="Phosphoserine" evidence="2">
    <location>
        <position position="263"/>
    </location>
</feature>
<feature type="sequence conflict" description="In Ref. 3; AA sequence." evidence="6" ref="3">
    <original>N</original>
    <variation>D</variation>
    <location>
        <position position="254"/>
    </location>
</feature>
<feature type="sequence conflict" description="In Ref. 3; AA sequence." evidence="6" ref="3">
    <original>DDWATWTSFLS</original>
    <variation>GDWGAWSRFLA</variation>
    <location>
        <begin position="299"/>
        <end position="309"/>
    </location>
</feature>
<feature type="sequence conflict" description="In Ref. 3; AA sequence." evidence="6" ref="3">
    <original>I</original>
    <variation>V</variation>
    <location>
        <position position="315"/>
    </location>
</feature>
<keyword id="KW-0007">Acetylation</keyword>
<keyword id="KW-0963">Cytoplasm</keyword>
<keyword id="KW-0903">Direct protein sequencing</keyword>
<keyword id="KW-0324">Glycolysis</keyword>
<keyword id="KW-0456">Lyase</keyword>
<keyword id="KW-0460">Magnesium</keyword>
<keyword id="KW-0479">Metal-binding</keyword>
<keyword id="KW-0597">Phosphoprotein</keyword>
<keyword id="KW-1185">Reference proteome</keyword>
<protein>
    <recommendedName>
        <fullName>Beta-enolase</fullName>
        <ecNumber evidence="3">4.2.1.11</ecNumber>
    </recommendedName>
    <alternativeName>
        <fullName>2-phospho-D-glycerate hydro-lyase</fullName>
    </alternativeName>
    <alternativeName>
        <fullName>Enolase 3</fullName>
    </alternativeName>
    <alternativeName>
        <fullName>Muscle-specific enolase</fullName>
        <shortName>MSE</shortName>
    </alternativeName>
    <alternativeName>
        <fullName>Skeletal muscle enolase</fullName>
    </alternativeName>
</protein>
<sequence>MAMQKIFAREILDSRGNPTVEVDLHTAKGRFRAAVPSGASTGIYEALELRDGDKSRYLGKGVLKAVEHINKTLGPALLEKKLSVVDQEKVDKFMIELDGTENKSKFGANAILGVSLAVCKAGAAEKGVPLYRHIADLAGNHDLVLPVPAFNVINGGSHAGNKLAMQEFMILPVGASSFREAMRIGAEVYHHLKGVIKAKYGKDATNVGDEGGFAPNILENNEALELLKTAIQAAGYPDKVVIGMDVAASEFHRNGKYDLDFKSPDDPARHITGQKLGELYKSFIKNYPVVSIEDPFDQDDWATWTSFLSGVDIQIVGDDLTVTNPKRIAQAVEKKACNCLLLKVNQIGSVTESIQACKLAQSNGWGVMVSHRSGETEDTFIADLVVGLCTGQIKTGAPCRSERLAKYNQLMRIEEALGDKAVFAGRKFRNPKAK</sequence>
<evidence type="ECO:0000250" key="1"/>
<evidence type="ECO:0000250" key="2">
    <source>
        <dbReference type="UniProtKB" id="P13929"/>
    </source>
</evidence>
<evidence type="ECO:0000250" key="3">
    <source>
        <dbReference type="UniProtKB" id="P15429"/>
    </source>
</evidence>
<evidence type="ECO:0000269" key="4">
    <source>
    </source>
</evidence>
<evidence type="ECO:0000269" key="5">
    <source>
    </source>
</evidence>
<evidence type="ECO:0000305" key="6"/>
<proteinExistence type="evidence at protein level"/>